<protein>
    <recommendedName>
        <fullName>Gag polyprotein</fullName>
    </recommendedName>
    <alternativeName>
        <fullName>Pr55Gag</fullName>
    </alternativeName>
    <component>
        <recommendedName>
            <fullName>Matrix protein p17</fullName>
            <shortName>MA</shortName>
        </recommendedName>
    </component>
    <component>
        <recommendedName>
            <fullName>Capsid protein p24</fullName>
            <shortName>CA</shortName>
        </recommendedName>
    </component>
    <component>
        <recommendedName>
            <fullName evidence="6">Spacer peptide 1</fullName>
            <shortName>SP1</shortName>
        </recommendedName>
        <alternativeName>
            <fullName>p2</fullName>
        </alternativeName>
    </component>
    <component>
        <recommendedName>
            <fullName>Nucleocapsid protein p7</fullName>
            <shortName>NC</shortName>
        </recommendedName>
    </component>
    <component>
        <recommendedName>
            <fullName evidence="6">Spacer peptide 2</fullName>
            <shortName>SP2</shortName>
        </recommendedName>
        <alternativeName>
            <fullName>p1</fullName>
        </alternativeName>
    </component>
    <component>
        <recommendedName>
            <fullName>p6-gag</fullName>
        </recommendedName>
    </component>
</protein>
<sequence length="521" mass="58023">MGARNSVLRGKKADELEKVRLRPGGKKKYKLKHIVWAANELDRFGLAESLLESKEGCQRILKVLDPLVPTGSENLKSLFNTVCVIWCIHAEEKVKDTEEAKRIALRHLAAETGTAEKMPDTSRPTAPPSGKGGNYPVQSIGGNYTHVPLSPRTLNAWVKLVEEKKFGAEVVPGFQALSEGCTPYDINQMLNCVGDHQAAMQIIREIINEEAADWDANHPIPGPLPAGQLRDPRGSDIAGTTSTVEEQIQWMFRAQNPVPVGNIYRRWIQIGLQKCVRMYNPTNILDIKQGPKESFQSYVDRFYKSLRAEQTDPAVKNWMTQTLLVQNANPDCKLVLKGLGMNPTLEEMLTACQGVGGPGQKARLMAEALKEAMGPPPIPFAAAQQRRTIKCWNCGKEGHSARQCRAPRRQGCWKCGKPGHIMTNCPDRQAGFLGIGPWGKKPRNFPVAQVPQGLTPTAPPLDPAVDLLEKYMQQGKRQREQRQRPYKEVTEDLLHLEQGEAPCRETTEDLLHLNSLFGKDQ</sequence>
<gene>
    <name type="primary">gag</name>
</gene>
<feature type="initiator methionine" description="Removed; by host" evidence="1">
    <location>
        <position position="1"/>
    </location>
</feature>
<feature type="chain" id="PRO_0000261241" description="Gag polyprotein">
    <location>
        <begin position="2"/>
        <end position="521"/>
    </location>
</feature>
<feature type="chain" id="PRO_0000038603" description="Matrix protein p17" evidence="1">
    <location>
        <begin position="2"/>
        <end position="135"/>
    </location>
</feature>
<feature type="chain" id="PRO_0000038604" description="Capsid protein p24" evidence="1">
    <location>
        <begin position="136"/>
        <end position="365"/>
    </location>
</feature>
<feature type="peptide" id="PRO_0000042067" description="Spacer peptide 1" evidence="1">
    <location>
        <begin position="366"/>
        <end position="382"/>
    </location>
</feature>
<feature type="chain" id="PRO_0000042068" description="Nucleocapsid protein p7" evidence="1">
    <location>
        <begin position="383"/>
        <end position="431"/>
    </location>
</feature>
<feature type="peptide" id="PRO_0000042069" description="Spacer peptide 2" evidence="1">
    <location>
        <begin position="432"/>
        <end position="445"/>
    </location>
</feature>
<feature type="chain" id="PRO_0000042070" description="p6-gag" evidence="1">
    <location>
        <begin position="446"/>
        <end position="521"/>
    </location>
</feature>
<feature type="zinc finger region" description="CCHC-type 1" evidence="9">
    <location>
        <begin position="389"/>
        <end position="406"/>
    </location>
</feature>
<feature type="zinc finger region" description="CCHC-type 2" evidence="9">
    <location>
        <begin position="410"/>
        <end position="427"/>
    </location>
</feature>
<feature type="region of interest" description="Interaction with Gp41" evidence="6">
    <location>
        <begin position="7"/>
        <end position="31"/>
    </location>
</feature>
<feature type="region of interest" description="Interaction with host CALM1" evidence="5">
    <location>
        <begin position="8"/>
        <end position="43"/>
    </location>
</feature>
<feature type="region of interest" description="Interaction with host AP3D1" evidence="7">
    <location>
        <begin position="12"/>
        <end position="19"/>
    </location>
</feature>
<feature type="region of interest" description="Interaction with membrane phosphatidylinositol 4,5-bisphosphate and RNA" evidence="6">
    <location>
        <begin position="14"/>
        <end position="33"/>
    </location>
</feature>
<feature type="region of interest" description="Interaction with membrane phosphatidylinositol 4,5-bisphosphate" evidence="6">
    <location>
        <begin position="73"/>
        <end position="77"/>
    </location>
</feature>
<feature type="region of interest" description="Disordered" evidence="10">
    <location>
        <begin position="111"/>
        <end position="136"/>
    </location>
</feature>
<feature type="region of interest" description="Interaction with host PPIA/CYPA and NUP153" evidence="6">
    <location>
        <begin position="191"/>
        <end position="228"/>
    </location>
</feature>
<feature type="region of interest" description="PPIA/CYPA-binding loop" evidence="5">
    <location>
        <begin position="219"/>
        <end position="226"/>
    </location>
</feature>
<feature type="region of interest" description="Dimerization/Multimerization of capsid protein p24" evidence="5">
    <location>
        <begin position="279"/>
        <end position="365"/>
    </location>
</feature>
<feature type="short sequence motif" description="Nuclear export signal" evidence="1">
    <location>
        <begin position="16"/>
        <end position="22"/>
    </location>
</feature>
<feature type="short sequence motif" description="Nuclear localization signal" evidence="1">
    <location>
        <begin position="26"/>
        <end position="32"/>
    </location>
</feature>
<feature type="short sequence motif" description="PTAP/PSAP motif">
    <location>
        <begin position="456"/>
        <end position="459"/>
    </location>
</feature>
<feature type="site" description="Cleavage; by viral protease" evidence="1">
    <location>
        <begin position="135"/>
        <end position="136"/>
    </location>
</feature>
<feature type="site" description="Cleavage; by viral protease" evidence="1">
    <location>
        <begin position="365"/>
        <end position="366"/>
    </location>
</feature>
<feature type="site" description="Cleavage; by viral protease" evidence="1">
    <location>
        <begin position="382"/>
        <end position="383"/>
    </location>
</feature>
<feature type="site" description="Cleavage; by viral protease" evidence="1">
    <location>
        <begin position="431"/>
        <end position="432"/>
    </location>
</feature>
<feature type="site" description="Cleavage; by viral protease" evidence="1">
    <location>
        <begin position="445"/>
        <end position="446"/>
    </location>
</feature>
<feature type="modified residue" description="Phosphoserine; by host MAPK1" evidence="6">
    <location>
        <position position="150"/>
    </location>
</feature>
<feature type="lipid moiety-binding region" description="N-myristoyl glycine; by host" evidence="1">
    <location>
        <position position="2"/>
    </location>
</feature>
<proteinExistence type="inferred from homology"/>
<name>GAG_HV2CA</name>
<keyword id="KW-0014">AIDS</keyword>
<keyword id="KW-0167">Capsid protein</keyword>
<keyword id="KW-1032">Host cell membrane</keyword>
<keyword id="KW-1035">Host cytoplasm</keyword>
<keyword id="KW-1039">Host endosome</keyword>
<keyword id="KW-1043">Host membrane</keyword>
<keyword id="KW-1048">Host nucleus</keyword>
<keyword id="KW-0945">Host-virus interaction</keyword>
<keyword id="KW-0449">Lipoprotein</keyword>
<keyword id="KW-0472">Membrane</keyword>
<keyword id="KW-0479">Metal-binding</keyword>
<keyword id="KW-0519">Myristate</keyword>
<keyword id="KW-0597">Phosphoprotein</keyword>
<keyword id="KW-0677">Repeat</keyword>
<keyword id="KW-0688">Ribosomal frameshifting</keyword>
<keyword id="KW-0694">RNA-binding</keyword>
<keyword id="KW-1198">Viral budding</keyword>
<keyword id="KW-1187">Viral budding via the host ESCRT complexes</keyword>
<keyword id="KW-0543">Viral nucleoprotein</keyword>
<keyword id="KW-1188">Viral release from host cell</keyword>
<keyword id="KW-0946">Virion</keyword>
<keyword id="KW-0862">Zinc</keyword>
<keyword id="KW-0863">Zinc-finger</keyword>
<organism>
    <name type="scientific">Human immunodeficiency virus type 2 subtype A (isolate CAM2)</name>
    <name type="common">HIV-2</name>
    <dbReference type="NCBI Taxonomy" id="11715"/>
    <lineage>
        <taxon>Viruses</taxon>
        <taxon>Riboviria</taxon>
        <taxon>Pararnavirae</taxon>
        <taxon>Artverviricota</taxon>
        <taxon>Revtraviricetes</taxon>
        <taxon>Ortervirales</taxon>
        <taxon>Retroviridae</taxon>
        <taxon>Orthoretrovirinae</taxon>
        <taxon>Lentivirus</taxon>
        <taxon>Human immunodeficiency virus 2</taxon>
    </lineage>
</organism>
<reference key="1">
    <citation type="journal article" date="1991" name="J. Gen. Virol.">
        <title>Nucleotide sequence of a Guinea-Bissau-derived human immunodeficiency virus type 2 proviral clone (HIV-2CAM2).</title>
        <authorList>
            <person name="Tristem M."/>
            <person name="Hill F."/>
            <person name="Karpas A."/>
        </authorList>
    </citation>
    <scope>NUCLEOTIDE SEQUENCE [GENOMIC DNA]</scope>
</reference>
<evidence type="ECO:0000250" key="1"/>
<evidence type="ECO:0000250" key="2">
    <source>
        <dbReference type="UniProtKB" id="P03347"/>
    </source>
</evidence>
<evidence type="ECO:0000250" key="3">
    <source>
        <dbReference type="UniProtKB" id="P03348"/>
    </source>
</evidence>
<evidence type="ECO:0000250" key="4">
    <source>
        <dbReference type="UniProtKB" id="P03349"/>
    </source>
</evidence>
<evidence type="ECO:0000250" key="5">
    <source>
        <dbReference type="UniProtKB" id="P04591"/>
    </source>
</evidence>
<evidence type="ECO:0000250" key="6">
    <source>
        <dbReference type="UniProtKB" id="P12493"/>
    </source>
</evidence>
<evidence type="ECO:0000250" key="7">
    <source>
        <dbReference type="UniProtKB" id="P12497"/>
    </source>
</evidence>
<evidence type="ECO:0000250" key="8">
    <source>
        <dbReference type="UniProtKB" id="P18095"/>
    </source>
</evidence>
<evidence type="ECO:0000255" key="9">
    <source>
        <dbReference type="PROSITE-ProRule" id="PRU00047"/>
    </source>
</evidence>
<evidence type="ECO:0000256" key="10">
    <source>
        <dbReference type="SAM" id="MobiDB-lite"/>
    </source>
</evidence>
<evidence type="ECO:0000305" key="11"/>
<dbReference type="EMBL" id="D00835">
    <property type="protein sequence ID" value="BAA00709.1"/>
    <property type="molecule type" value="Genomic_DNA"/>
</dbReference>
<dbReference type="PIR" id="A38475">
    <property type="entry name" value="FOLJCA"/>
</dbReference>
<dbReference type="SMR" id="P24106"/>
<dbReference type="PRO" id="PR:P24106"/>
<dbReference type="Proteomes" id="UP000007421">
    <property type="component" value="Segment"/>
</dbReference>
<dbReference type="GO" id="GO:0042025">
    <property type="term" value="C:host cell nucleus"/>
    <property type="evidence" value="ECO:0007669"/>
    <property type="project" value="UniProtKB-SubCell"/>
</dbReference>
<dbReference type="GO" id="GO:0020002">
    <property type="term" value="C:host cell plasma membrane"/>
    <property type="evidence" value="ECO:0007669"/>
    <property type="project" value="UniProtKB-SubCell"/>
</dbReference>
<dbReference type="GO" id="GO:0072494">
    <property type="term" value="C:host multivesicular body"/>
    <property type="evidence" value="ECO:0007669"/>
    <property type="project" value="UniProtKB-SubCell"/>
</dbReference>
<dbReference type="GO" id="GO:0016020">
    <property type="term" value="C:membrane"/>
    <property type="evidence" value="ECO:0007669"/>
    <property type="project" value="UniProtKB-KW"/>
</dbReference>
<dbReference type="GO" id="GO:0019013">
    <property type="term" value="C:viral nucleocapsid"/>
    <property type="evidence" value="ECO:0007669"/>
    <property type="project" value="UniProtKB-KW"/>
</dbReference>
<dbReference type="GO" id="GO:0055036">
    <property type="term" value="C:virion membrane"/>
    <property type="evidence" value="ECO:0007669"/>
    <property type="project" value="UniProtKB-SubCell"/>
</dbReference>
<dbReference type="GO" id="GO:0003723">
    <property type="term" value="F:RNA binding"/>
    <property type="evidence" value="ECO:0007669"/>
    <property type="project" value="UniProtKB-KW"/>
</dbReference>
<dbReference type="GO" id="GO:0005198">
    <property type="term" value="F:structural molecule activity"/>
    <property type="evidence" value="ECO:0007669"/>
    <property type="project" value="InterPro"/>
</dbReference>
<dbReference type="GO" id="GO:0008270">
    <property type="term" value="F:zinc ion binding"/>
    <property type="evidence" value="ECO:0007669"/>
    <property type="project" value="UniProtKB-KW"/>
</dbReference>
<dbReference type="GO" id="GO:0039702">
    <property type="term" value="P:viral budding via host ESCRT complex"/>
    <property type="evidence" value="ECO:0007669"/>
    <property type="project" value="UniProtKB-KW"/>
</dbReference>
<dbReference type="GO" id="GO:0075523">
    <property type="term" value="P:viral translational frameshifting"/>
    <property type="evidence" value="ECO:0007669"/>
    <property type="project" value="UniProtKB-KW"/>
</dbReference>
<dbReference type="Gene3D" id="1.10.1200.30">
    <property type="match status" value="1"/>
</dbReference>
<dbReference type="Gene3D" id="1.10.375.10">
    <property type="entry name" value="Human Immunodeficiency Virus Type 1 Capsid Protein"/>
    <property type="match status" value="1"/>
</dbReference>
<dbReference type="Gene3D" id="1.10.150.90">
    <property type="entry name" value="Immunodeficiency lentiviruses, gag gene matrix protein p17"/>
    <property type="match status" value="1"/>
</dbReference>
<dbReference type="Gene3D" id="1.20.5.760">
    <property type="entry name" value="Single helix bin"/>
    <property type="match status" value="1"/>
</dbReference>
<dbReference type="Gene3D" id="4.10.60.10">
    <property type="entry name" value="Zinc finger, CCHC-type"/>
    <property type="match status" value="1"/>
</dbReference>
<dbReference type="InterPro" id="IPR045345">
    <property type="entry name" value="Gag_p24_C"/>
</dbReference>
<dbReference type="InterPro" id="IPR000071">
    <property type="entry name" value="Lentvrl_matrix_N"/>
</dbReference>
<dbReference type="InterPro" id="IPR012344">
    <property type="entry name" value="Matrix_HIV/RSV_N"/>
</dbReference>
<dbReference type="InterPro" id="IPR050195">
    <property type="entry name" value="Primate_lentivir_Gag_pol-like"/>
</dbReference>
<dbReference type="InterPro" id="IPR008916">
    <property type="entry name" value="Retrov_capsid_C"/>
</dbReference>
<dbReference type="InterPro" id="IPR008919">
    <property type="entry name" value="Retrov_capsid_N"/>
</dbReference>
<dbReference type="InterPro" id="IPR010999">
    <property type="entry name" value="Retrovr_matrix"/>
</dbReference>
<dbReference type="InterPro" id="IPR001878">
    <property type="entry name" value="Znf_CCHC"/>
</dbReference>
<dbReference type="InterPro" id="IPR036875">
    <property type="entry name" value="Znf_CCHC_sf"/>
</dbReference>
<dbReference type="PANTHER" id="PTHR40389">
    <property type="entry name" value="ENDOGENOUS RETROVIRUS GROUP K MEMBER 24 GAG POLYPROTEIN-RELATED"/>
    <property type="match status" value="1"/>
</dbReference>
<dbReference type="PANTHER" id="PTHR40389:SF2">
    <property type="entry name" value="ENDOGENOUS RETROVIRUS GROUP K MEMBER 24 GAG POLYPROTEIN-RELATED"/>
    <property type="match status" value="1"/>
</dbReference>
<dbReference type="Pfam" id="PF00540">
    <property type="entry name" value="Gag_p17"/>
    <property type="match status" value="1"/>
</dbReference>
<dbReference type="Pfam" id="PF00607">
    <property type="entry name" value="Gag_p24"/>
    <property type="match status" value="1"/>
</dbReference>
<dbReference type="Pfam" id="PF19317">
    <property type="entry name" value="Gag_p24_C"/>
    <property type="match status" value="1"/>
</dbReference>
<dbReference type="Pfam" id="PF00098">
    <property type="entry name" value="zf-CCHC"/>
    <property type="match status" value="2"/>
</dbReference>
<dbReference type="PRINTS" id="PR00234">
    <property type="entry name" value="HIV1MATRIX"/>
</dbReference>
<dbReference type="SMART" id="SM00343">
    <property type="entry name" value="ZnF_C2HC"/>
    <property type="match status" value="2"/>
</dbReference>
<dbReference type="SUPFAM" id="SSF47836">
    <property type="entry name" value="Retroviral matrix proteins"/>
    <property type="match status" value="1"/>
</dbReference>
<dbReference type="SUPFAM" id="SSF47353">
    <property type="entry name" value="Retrovirus capsid dimerization domain-like"/>
    <property type="match status" value="1"/>
</dbReference>
<dbReference type="SUPFAM" id="SSF47943">
    <property type="entry name" value="Retrovirus capsid protein, N-terminal core domain"/>
    <property type="match status" value="1"/>
</dbReference>
<dbReference type="SUPFAM" id="SSF57756">
    <property type="entry name" value="Retrovirus zinc finger-like domains"/>
    <property type="match status" value="1"/>
</dbReference>
<dbReference type="PROSITE" id="PS50158">
    <property type="entry name" value="ZF_CCHC"/>
    <property type="match status" value="2"/>
</dbReference>
<organismHost>
    <name type="scientific">Homo sapiens</name>
    <name type="common">Human</name>
    <dbReference type="NCBI Taxonomy" id="9606"/>
</organismHost>
<comment type="function">
    <molecule>Gag polyprotein</molecule>
    <text evidence="5">Mediates, with Gag-Pol polyprotein, the essential events in virion assembly, including binding the plasma membrane, making the protein-protein interactions necessary to create spherical particles, recruiting the viral Env proteins, and packaging the genomic RNA via direct interactions with the RNA packaging sequence (Psi).</text>
</comment>
<comment type="function">
    <molecule>Matrix protein p17</molecule>
    <text evidence="1 6">Targets the polyprotein to the plasma membrane via a multipartite membrane-binding signal, that includes its myristoylated N-terminus (By similarity). Matrix protein is part of the pre-integration complex. Implicated in the release from host cell mediated by Vpu. Binds to RNA (By similarity).</text>
</comment>
<comment type="function">
    <molecule>Capsid protein p24</molecule>
    <text evidence="5 6 8">Forms the conical core that encapsulates the genomic RNA-nucleocapsid complex in the virion (By similarity). Most core are conical, with only 7% tubular (By similarity). The core is constituted by capsid protein hexamer subunits (By similarity). The core is disassembled soon after virion entry (By similarity). Host restriction factors such as TRIM5-alpha or TRIMCyp bind retroviral capsids and cause premature capsid disassembly, leading to blocks in reverse transcription (By similarity). Capsid restriction by TRIM5 is one of the factors which restricts HIV-1 to the human species (By similarity). Host PIN1 apparently facilitates the virion uncoating (By similarity). On the other hand, interactions with PDZD8 or CYPA stabilize the capsid (By similarity). The capsid interacts with high affinity with human NONO, promoting detection of viral DNA by CGAS, leading to CGAS-mediated inmmune activation (By similarity).</text>
</comment>
<comment type="function">
    <molecule>Nucleocapsid protein p7</molecule>
    <text evidence="5">Encapsulates and protects viral dimeric unspliced genomic RNA (gRNA). Binds these RNAs through its zinc fingers. Acts as a nucleic acid chaperone which is involved in rearangement of nucleic acid secondary structure during gRNA retrotranscription. Also facilitates template switch leading to recombination. As part of the polyprotein, participates in gRNA dimerization, packaging, tRNA incorporation and virion assembly.</text>
</comment>
<comment type="function">
    <molecule>p6-gag</molecule>
    <text evidence="6">Plays a role in budding of the assembled particle by interacting with the host class E VPS proteins TSG101 and PDCD6IP/AIP1.</text>
</comment>
<comment type="subunit">
    <molecule>Gag polyprotein</molecule>
    <text evidence="4 5">Homotrimer; further assembles as hexamers of trimers. Oligomerization possibly creates a central hole into which the cytoplasmic tail of the gp41 envelope protein may be inserted. Interacts with host TRIM22; this interaction seems to disrupt proper trafficking of Gag polyprotein and may interfere with budding. Interacts with host PDZD8. When ubiquitinated, interacts (via p6-gag domain) with host PACSIN2; this interaction allows PACSIN2 recruitment to viral assembly sites and its subsequent incorporation into virions (By similarity).</text>
</comment>
<comment type="subunit">
    <molecule>Matrix protein p17</molecule>
    <text evidence="5 6">Homotrimer; further assembles as hexamers of trimers. Interacts with gp41 (via C-terminus). Interacts with host CALM1; this interaction induces a conformational change in the Matrix protein, triggering exposure of the myristate group. Interacts with host AP3D1; this interaction allows the polyprotein trafficking to multivesicular bodies during virus assembly. Part of the pre-integration complex (PIC) which is composed of viral genome, matrix protein, Vpr and integrase.</text>
</comment>
<comment type="subunit">
    <molecule>Capsid protein p24</molecule>
    <text evidence="5 6 8">Homodimer; the homodimer further multimerizes as homohexamers or homopentamers (By similarity). Interacts with host NUP98 (By similarity). Interacts with host PPIA/CYPA; this interaction stabilizes the capsid (By similarity). Interacts with host NUP153 (By similarity). Interacts with host PDZD8; this interaction stabilizes the capsid. Interacts with host TRIM5; this interaction destabilizes the capsid (By similarity). Interacts with host CPSF6 (By similarity). Interacts with host NONO; the interaction is the interaction is strong and promotes CGAS-mediated immunity (By similarity).</text>
</comment>
<comment type="subunit">
    <molecule>Nucleocapsid protein p7</molecule>
    <text evidence="6">Interacts with host NUP98.</text>
</comment>
<comment type="subunit">
    <molecule>p6-gag</molecule>
    <text evidence="3 6">Interacts with Vpr; this interaction allows Vpr incorporation into the virion. Interacts with host TSG101. p6-gag interacts with host PDCD6IP/AIP1.</text>
</comment>
<comment type="subcellular location">
    <molecule>Gag polyprotein</molecule>
    <subcellularLocation>
        <location evidence="6">Host cell membrane</location>
        <topology evidence="6">Lipid-anchor</topology>
    </subcellularLocation>
    <subcellularLocation>
        <location evidence="6">Host endosome</location>
        <location evidence="6">Host multivesicular body</location>
    </subcellularLocation>
    <text evidence="6">These locations are probably linked to virus assembly sites. The main location is the cell membrane, but under some circumstances, late endosomal compartments can serve as productive sites for virion assembly.</text>
</comment>
<comment type="subcellular location">
    <molecule>Matrix protein p17</molecule>
    <subcellularLocation>
        <location evidence="6">Virion membrane</location>
        <topology evidence="6">Lipid-anchor</topology>
    </subcellularLocation>
    <subcellularLocation>
        <location evidence="1">Host nucleus</location>
    </subcellularLocation>
    <subcellularLocation>
        <location evidence="1">Host cytoplasm</location>
    </subcellularLocation>
</comment>
<comment type="subcellular location">
    <molecule>Capsid protein p24</molecule>
    <subcellularLocation>
        <location evidence="6">Virion</location>
    </subcellularLocation>
</comment>
<comment type="subcellular location">
    <molecule>Nucleocapsid protein p7</molecule>
    <subcellularLocation>
        <location evidence="6">Virion</location>
    </subcellularLocation>
</comment>
<comment type="alternative products">
    <event type="ribosomal frameshifting"/>
    <isoform>
        <id>P24106-1</id>
        <name>Gag polyprotein</name>
        <sequence type="displayed"/>
    </isoform>
    <isoform>
        <id>P24107-1</id>
        <name>Gag-Pol polyprotein</name>
        <sequence type="external"/>
    </isoform>
    <text>Translation results in the formation of the Gag polyprotein most of the time. Ribosomal frameshifting at the gag-pol genes boundary occurs at low frequency and produces the Gag-Pol polyprotein. This strategy of translation probably allows the virus to modulate the quantity of each viral protein. Maintenance of a correct Gag to Gag-Pol ratio is essential for RNA dimerization and viral infectivity.</text>
</comment>
<comment type="domain">
    <text evidence="1">Late-budding domains (L domains) are short sequence motifs essential for viral particle budding. They recruit proteins of the host ESCRT machinery (Endosomal Sorting Complex Required for Transport) or ESCRT-associated proteins. p6-gag contains one L domains: a PTAP/PSAP motif, which interacts with the UEV domain of TSG101 (By similarity).</text>
</comment>
<comment type="PTM">
    <text evidence="6">Gag-Pol polyprotein: Specific enzymatic cleavages by the viral protease yield mature proteins.</text>
</comment>
<comment type="PTM">
    <molecule>Matrix protein p17</molecule>
    <text evidence="5">Tyrosine phosphorylated presumably in the virion by a host kinase. Phosphorylation is apparently not a major regulator of membrane association.</text>
</comment>
<comment type="PTM">
    <text evidence="6">Capsid protein p24 is phosphorylated possibly by host MAPK1; this phosphorylation is necessary for Pin1-mediated virion uncoating.</text>
</comment>
<comment type="PTM">
    <text evidence="2">Nucleocapsid protein p7 is methylated by host PRMT6, impairing its function by reducing RNA annealing and the initiation of reverse transcription.</text>
</comment>
<comment type="miscellaneous">
    <molecule>Isoform Gag polyprotein</molecule>
    <text>Produced by conventional translation.</text>
</comment>
<comment type="similarity">
    <text evidence="11">Belongs to the primate lentivirus group gag polyprotein family.</text>
</comment>
<accession>P24106</accession>